<name>RPOZ_NITOC</name>
<protein>
    <recommendedName>
        <fullName evidence="1">DNA-directed RNA polymerase subunit omega</fullName>
        <shortName evidence="1">RNAP omega subunit</shortName>
        <ecNumber evidence="1">2.7.7.6</ecNumber>
    </recommendedName>
    <alternativeName>
        <fullName evidence="1">RNA polymerase omega subunit</fullName>
    </alternativeName>
    <alternativeName>
        <fullName evidence="1">Transcriptase subunit omega</fullName>
    </alternativeName>
</protein>
<comment type="function">
    <text evidence="1">Promotes RNA polymerase assembly. Latches the N- and C-terminal regions of the beta' subunit thereby facilitating its interaction with the beta and alpha subunits.</text>
</comment>
<comment type="catalytic activity">
    <reaction evidence="1">
        <text>RNA(n) + a ribonucleoside 5'-triphosphate = RNA(n+1) + diphosphate</text>
        <dbReference type="Rhea" id="RHEA:21248"/>
        <dbReference type="Rhea" id="RHEA-COMP:14527"/>
        <dbReference type="Rhea" id="RHEA-COMP:17342"/>
        <dbReference type="ChEBI" id="CHEBI:33019"/>
        <dbReference type="ChEBI" id="CHEBI:61557"/>
        <dbReference type="ChEBI" id="CHEBI:140395"/>
        <dbReference type="EC" id="2.7.7.6"/>
    </reaction>
</comment>
<comment type="subunit">
    <text evidence="1">The RNAP catalytic core consists of 2 alpha, 1 beta, 1 beta' and 1 omega subunit. When a sigma factor is associated with the core the holoenzyme is formed, which can initiate transcription.</text>
</comment>
<comment type="similarity">
    <text evidence="1">Belongs to the RNA polymerase subunit omega family.</text>
</comment>
<feature type="chain" id="PRO_0000237479" description="DNA-directed RNA polymerase subunit omega">
    <location>
        <begin position="1"/>
        <end position="86"/>
    </location>
</feature>
<feature type="region of interest" description="Disordered" evidence="2">
    <location>
        <begin position="67"/>
        <end position="86"/>
    </location>
</feature>
<feature type="compositionally biased region" description="Basic and acidic residues" evidence="2">
    <location>
        <begin position="67"/>
        <end position="76"/>
    </location>
</feature>
<feature type="compositionally biased region" description="Acidic residues" evidence="2">
    <location>
        <begin position="77"/>
        <end position="86"/>
    </location>
</feature>
<proteinExistence type="inferred from homology"/>
<evidence type="ECO:0000255" key="1">
    <source>
        <dbReference type="HAMAP-Rule" id="MF_00366"/>
    </source>
</evidence>
<evidence type="ECO:0000256" key="2">
    <source>
        <dbReference type="SAM" id="MobiDB-lite"/>
    </source>
</evidence>
<organism>
    <name type="scientific">Nitrosococcus oceani (strain ATCC 19707 / BCRC 17464 / JCM 30415 / NCIMB 11848 / C-107)</name>
    <dbReference type="NCBI Taxonomy" id="323261"/>
    <lineage>
        <taxon>Bacteria</taxon>
        <taxon>Pseudomonadati</taxon>
        <taxon>Pseudomonadota</taxon>
        <taxon>Gammaproteobacteria</taxon>
        <taxon>Chromatiales</taxon>
        <taxon>Chromatiaceae</taxon>
        <taxon>Nitrosococcus</taxon>
    </lineage>
</organism>
<keyword id="KW-0240">DNA-directed RNA polymerase</keyword>
<keyword id="KW-0548">Nucleotidyltransferase</keyword>
<keyword id="KW-1185">Reference proteome</keyword>
<keyword id="KW-0804">Transcription</keyword>
<keyword id="KW-0808">Transferase</keyword>
<sequence length="86" mass="9503">MARLTVEDCIDNIDNRFLLVLAAAKRARQLAMGATPTVPWDKDKPTVVALREIAEGHIDVGVMDTASAREHAKESQVSEEEVREES</sequence>
<reference key="1">
    <citation type="journal article" date="2006" name="Appl. Environ. Microbiol.">
        <title>Complete genome sequence of the marine, chemolithoautotrophic, ammonia-oxidizing bacterium Nitrosococcus oceani ATCC 19707.</title>
        <authorList>
            <person name="Klotz M.G."/>
            <person name="Arp D.J."/>
            <person name="Chain P.S.G."/>
            <person name="El-Sheikh A.F."/>
            <person name="Hauser L.J."/>
            <person name="Hommes N.G."/>
            <person name="Larimer F.W."/>
            <person name="Malfatti S.A."/>
            <person name="Norton J.M."/>
            <person name="Poret-Peterson A.T."/>
            <person name="Vergez L.M."/>
            <person name="Ward B.B."/>
        </authorList>
    </citation>
    <scope>NUCLEOTIDE SEQUENCE [LARGE SCALE GENOMIC DNA]</scope>
    <source>
        <strain>ATCC 19707 / BCRC 17464 / JCM 30415 / NCIMB 11848 / C-107</strain>
    </source>
</reference>
<gene>
    <name evidence="1" type="primary">rpoZ</name>
    <name type="ordered locus">Noc_1213</name>
</gene>
<accession>Q3JBT2</accession>
<dbReference type="EC" id="2.7.7.6" evidence="1"/>
<dbReference type="EMBL" id="CP000127">
    <property type="protein sequence ID" value="ABA57714.1"/>
    <property type="molecule type" value="Genomic_DNA"/>
</dbReference>
<dbReference type="RefSeq" id="WP_002808884.1">
    <property type="nucleotide sequence ID" value="NC_007484.1"/>
</dbReference>
<dbReference type="SMR" id="Q3JBT2"/>
<dbReference type="FunCoup" id="Q3JBT2">
    <property type="interactions" value="184"/>
</dbReference>
<dbReference type="STRING" id="323261.Noc_1213"/>
<dbReference type="KEGG" id="noc:Noc_1213"/>
<dbReference type="eggNOG" id="COG1758">
    <property type="taxonomic scope" value="Bacteria"/>
</dbReference>
<dbReference type="HOGENOM" id="CLU_125406_5_3_6"/>
<dbReference type="InParanoid" id="Q3JBT2"/>
<dbReference type="Proteomes" id="UP000006838">
    <property type="component" value="Chromosome"/>
</dbReference>
<dbReference type="GO" id="GO:0000428">
    <property type="term" value="C:DNA-directed RNA polymerase complex"/>
    <property type="evidence" value="ECO:0007669"/>
    <property type="project" value="UniProtKB-KW"/>
</dbReference>
<dbReference type="GO" id="GO:0003677">
    <property type="term" value="F:DNA binding"/>
    <property type="evidence" value="ECO:0007669"/>
    <property type="project" value="UniProtKB-UniRule"/>
</dbReference>
<dbReference type="GO" id="GO:0003899">
    <property type="term" value="F:DNA-directed RNA polymerase activity"/>
    <property type="evidence" value="ECO:0007669"/>
    <property type="project" value="UniProtKB-UniRule"/>
</dbReference>
<dbReference type="GO" id="GO:0006351">
    <property type="term" value="P:DNA-templated transcription"/>
    <property type="evidence" value="ECO:0007669"/>
    <property type="project" value="UniProtKB-UniRule"/>
</dbReference>
<dbReference type="Gene3D" id="3.90.940.10">
    <property type="match status" value="1"/>
</dbReference>
<dbReference type="HAMAP" id="MF_00366">
    <property type="entry name" value="RNApol_bact_RpoZ"/>
    <property type="match status" value="1"/>
</dbReference>
<dbReference type="InterPro" id="IPR003716">
    <property type="entry name" value="DNA-dir_RNA_pol_omega"/>
</dbReference>
<dbReference type="InterPro" id="IPR006110">
    <property type="entry name" value="Pol_omega/Rpo6/RPB6"/>
</dbReference>
<dbReference type="InterPro" id="IPR036161">
    <property type="entry name" value="RPB6/omega-like_sf"/>
</dbReference>
<dbReference type="NCBIfam" id="TIGR00690">
    <property type="entry name" value="rpoZ"/>
    <property type="match status" value="1"/>
</dbReference>
<dbReference type="PANTHER" id="PTHR34476">
    <property type="entry name" value="DNA-DIRECTED RNA POLYMERASE SUBUNIT OMEGA"/>
    <property type="match status" value="1"/>
</dbReference>
<dbReference type="PANTHER" id="PTHR34476:SF1">
    <property type="entry name" value="DNA-DIRECTED RNA POLYMERASE SUBUNIT OMEGA"/>
    <property type="match status" value="1"/>
</dbReference>
<dbReference type="Pfam" id="PF01192">
    <property type="entry name" value="RNA_pol_Rpb6"/>
    <property type="match status" value="1"/>
</dbReference>
<dbReference type="SMART" id="SM01409">
    <property type="entry name" value="RNA_pol_Rpb6"/>
    <property type="match status" value="1"/>
</dbReference>
<dbReference type="SUPFAM" id="SSF63562">
    <property type="entry name" value="RPB6/omega subunit-like"/>
    <property type="match status" value="1"/>
</dbReference>